<protein>
    <recommendedName>
        <fullName>Protein ABCI12, chloroplastic</fullName>
    </recommendedName>
    <alternativeName>
        <fullName>ABC transporter I family member 12</fullName>
        <shortName>ABC transporter ABCI.12</shortName>
        <shortName>AtABCI12</shortName>
    </alternativeName>
</protein>
<sequence>MNHSNLANPTVSLTVTLIPKHPIRHLTSPIPNRNFTNPKLLFPLRLNETPSSSLAAKRVFIVRATVDGDGKTGNWVNRLPIPGLGAENVFRLISSATGSPIGQFISSPVTFLHSVDPRIKLVWLLTLVVLPARANLVVRLGLVLCTALLSILVLPRQVWIDQLARVSLLSGILFITLGLGSDGAPPMLQSRTPPSSITSLPNLPMSLSGYSYMLLKLGPLQFTRKGLSVGSTAACLTFIIFQSASICLATTTPEQLALALRWFLFPLTYIGVPVSEIILTLLLSLRFINLVFDEVRSVSLGIVSRRVNWQQLTVLETLDIFASFIRRIFKNIFRHAEQISQAMIVRGFRGESSSHKIYFFSGSSNKFADFASVLCLIGVISTALLSEYFLV</sequence>
<keyword id="KW-0150">Chloroplast</keyword>
<keyword id="KW-0472">Membrane</keyword>
<keyword id="KW-0934">Plastid</keyword>
<keyword id="KW-1185">Reference proteome</keyword>
<keyword id="KW-0809">Transit peptide</keyword>
<keyword id="KW-0812">Transmembrane</keyword>
<keyword id="KW-1133">Transmembrane helix</keyword>
<evidence type="ECO:0000255" key="1"/>
<evidence type="ECO:0000269" key="2">
    <source>
    </source>
</evidence>
<evidence type="ECO:0000305" key="3"/>
<evidence type="ECO:0000305" key="4">
    <source>
    </source>
</evidence>
<gene>
    <name type="primary">ABCI12</name>
    <name type="ordered locus">At3g21580</name>
    <name type="ORF">MIL23.15</name>
</gene>
<organism>
    <name type="scientific">Arabidopsis thaliana</name>
    <name type="common">Mouse-ear cress</name>
    <dbReference type="NCBI Taxonomy" id="3702"/>
    <lineage>
        <taxon>Eukaryota</taxon>
        <taxon>Viridiplantae</taxon>
        <taxon>Streptophyta</taxon>
        <taxon>Embryophyta</taxon>
        <taxon>Tracheophyta</taxon>
        <taxon>Spermatophyta</taxon>
        <taxon>Magnoliopsida</taxon>
        <taxon>eudicotyledons</taxon>
        <taxon>Gunneridae</taxon>
        <taxon>Pentapetalae</taxon>
        <taxon>rosids</taxon>
        <taxon>malvids</taxon>
        <taxon>Brassicales</taxon>
        <taxon>Brassicaceae</taxon>
        <taxon>Camelineae</taxon>
        <taxon>Arabidopsis</taxon>
    </lineage>
</organism>
<accession>Q944H2</accession>
<accession>Q3EB30</accession>
<accession>Q9LVE8</accession>
<reference key="1">
    <citation type="journal article" date="2000" name="DNA Res.">
        <title>Structural analysis of Arabidopsis thaliana chromosome 3. I. Sequence features of the regions of 4,504,864 bp covered by sixty P1 and TAC clones.</title>
        <authorList>
            <person name="Sato S."/>
            <person name="Nakamura Y."/>
            <person name="Kaneko T."/>
            <person name="Katoh T."/>
            <person name="Asamizu E."/>
            <person name="Tabata S."/>
        </authorList>
    </citation>
    <scope>NUCLEOTIDE SEQUENCE [LARGE SCALE GENOMIC DNA]</scope>
    <source>
        <strain>cv. Columbia</strain>
    </source>
</reference>
<reference key="2">
    <citation type="journal article" date="2017" name="Plant J.">
        <title>Araport11: a complete reannotation of the Arabidopsis thaliana reference genome.</title>
        <authorList>
            <person name="Cheng C.Y."/>
            <person name="Krishnakumar V."/>
            <person name="Chan A.P."/>
            <person name="Thibaud-Nissen F."/>
            <person name="Schobel S."/>
            <person name="Town C.D."/>
        </authorList>
    </citation>
    <scope>GENOME REANNOTATION</scope>
    <source>
        <strain>cv. Columbia</strain>
    </source>
</reference>
<reference key="3">
    <citation type="journal article" date="2002" name="Science">
        <title>Functional annotation of a full-length Arabidopsis cDNA collection.</title>
        <authorList>
            <person name="Seki M."/>
            <person name="Narusaka M."/>
            <person name="Kamiya A."/>
            <person name="Ishida J."/>
            <person name="Satou M."/>
            <person name="Sakurai T."/>
            <person name="Nakajima M."/>
            <person name="Enju A."/>
            <person name="Akiyama K."/>
            <person name="Oono Y."/>
            <person name="Muramatsu M."/>
            <person name="Hayashizaki Y."/>
            <person name="Kawai J."/>
            <person name="Carninci P."/>
            <person name="Itoh M."/>
            <person name="Ishii Y."/>
            <person name="Arakawa T."/>
            <person name="Shibata K."/>
            <person name="Shinagawa A."/>
            <person name="Shinozaki K."/>
        </authorList>
    </citation>
    <scope>NUCLEOTIDE SEQUENCE [LARGE SCALE MRNA]</scope>
    <source>
        <strain>cv. Columbia</strain>
    </source>
</reference>
<reference key="4">
    <citation type="journal article" date="2003" name="Science">
        <title>Empirical analysis of transcriptional activity in the Arabidopsis genome.</title>
        <authorList>
            <person name="Yamada K."/>
            <person name="Lim J."/>
            <person name="Dale J.M."/>
            <person name="Chen H."/>
            <person name="Shinn P."/>
            <person name="Palm C.J."/>
            <person name="Southwick A.M."/>
            <person name="Wu H.C."/>
            <person name="Kim C.J."/>
            <person name="Nguyen M."/>
            <person name="Pham P.K."/>
            <person name="Cheuk R.F."/>
            <person name="Karlin-Newmann G."/>
            <person name="Liu S.X."/>
            <person name="Lam B."/>
            <person name="Sakano H."/>
            <person name="Wu T."/>
            <person name="Yu G."/>
            <person name="Miranda M."/>
            <person name="Quach H.L."/>
            <person name="Tripp M."/>
            <person name="Chang C.H."/>
            <person name="Lee J.M."/>
            <person name="Toriumi M.J."/>
            <person name="Chan M.M."/>
            <person name="Tang C.C."/>
            <person name="Onodera C.S."/>
            <person name="Deng J.M."/>
            <person name="Akiyama K."/>
            <person name="Ansari Y."/>
            <person name="Arakawa T."/>
            <person name="Banh J."/>
            <person name="Banno F."/>
            <person name="Bowser L."/>
            <person name="Brooks S.Y."/>
            <person name="Carninci P."/>
            <person name="Chao Q."/>
            <person name="Choy N."/>
            <person name="Enju A."/>
            <person name="Goldsmith A.D."/>
            <person name="Gurjal M."/>
            <person name="Hansen N.F."/>
            <person name="Hayashizaki Y."/>
            <person name="Johnson-Hopson C."/>
            <person name="Hsuan V.W."/>
            <person name="Iida K."/>
            <person name="Karnes M."/>
            <person name="Khan S."/>
            <person name="Koesema E."/>
            <person name="Ishida J."/>
            <person name="Jiang P.X."/>
            <person name="Jones T."/>
            <person name="Kawai J."/>
            <person name="Kamiya A."/>
            <person name="Meyers C."/>
            <person name="Nakajima M."/>
            <person name="Narusaka M."/>
            <person name="Seki M."/>
            <person name="Sakurai T."/>
            <person name="Satou M."/>
            <person name="Tamse R."/>
            <person name="Vaysberg M."/>
            <person name="Wallender E.K."/>
            <person name="Wong C."/>
            <person name="Yamamura Y."/>
            <person name="Yuan S."/>
            <person name="Shinozaki K."/>
            <person name="Davis R.W."/>
            <person name="Theologis A."/>
            <person name="Ecker J.R."/>
        </authorList>
    </citation>
    <scope>NUCLEOTIDE SEQUENCE [LARGE SCALE MRNA]</scope>
    <source>
        <strain>cv. Columbia</strain>
    </source>
</reference>
<reference key="5">
    <citation type="submission" date="2006-12" db="EMBL/GenBank/DDBJ databases">
        <title>Arabidopsis ORF clones.</title>
        <authorList>
            <person name="Bautista V.R."/>
            <person name="Kim C.J."/>
            <person name="Chen H."/>
            <person name="Quinitio C."/>
            <person name="Ecker J.R."/>
        </authorList>
    </citation>
    <scope>NUCLEOTIDE SEQUENCE [LARGE SCALE MRNA] OF 187-391</scope>
    <source>
        <strain>cv. Columbia</strain>
    </source>
</reference>
<reference key="6">
    <citation type="journal article" date="2008" name="PLoS ONE">
        <title>Sorting signals, N-terminal modifications and abundance of the chloroplast proteome.</title>
        <authorList>
            <person name="Zybailov B."/>
            <person name="Rutschow H."/>
            <person name="Friso G."/>
            <person name="Rudella A."/>
            <person name="Emanuelsson O."/>
            <person name="Sun Q."/>
            <person name="van Wijk K.J."/>
        </authorList>
    </citation>
    <scope>IDENTIFICATION BY MASS SPECTROMETRY</scope>
    <scope>SUBCELLULAR LOCATION [LARGE SCALE ANALYSIS]</scope>
</reference>
<reference key="7">
    <citation type="journal article" date="2008" name="Trends Plant Sci.">
        <title>Plant ABC proteins - a unified nomenclature and updated inventory.</title>
        <authorList>
            <person name="Verrier P.J."/>
            <person name="Bird D."/>
            <person name="Burla B."/>
            <person name="Dassa E."/>
            <person name="Forestier C."/>
            <person name="Geisler M."/>
            <person name="Klein M."/>
            <person name="Kolukisaoglu H.U."/>
            <person name="Lee Y."/>
            <person name="Martinoia E."/>
            <person name="Murphy A."/>
            <person name="Rea P.A."/>
            <person name="Samuels L."/>
            <person name="Schulz B."/>
            <person name="Spalding E.J."/>
            <person name="Yazaki K."/>
            <person name="Theodoulou F.L."/>
        </authorList>
    </citation>
    <scope>GENE FAMILY</scope>
    <scope>NOMENCLATURE</scope>
</reference>
<feature type="transit peptide" description="Chloroplast" evidence="1">
    <location>
        <begin position="1"/>
        <end position="63"/>
    </location>
</feature>
<feature type="chain" id="PRO_0000379143" description="Protein ABCI12, chloroplastic">
    <location>
        <begin position="64"/>
        <end position="391"/>
    </location>
</feature>
<feature type="transmembrane region" description="Helical" evidence="1">
    <location>
        <begin position="134"/>
        <end position="154"/>
    </location>
</feature>
<feature type="transmembrane region" description="Helical" evidence="1">
    <location>
        <begin position="168"/>
        <end position="188"/>
    </location>
</feature>
<feature type="transmembrane region" description="Helical" evidence="1">
    <location>
        <begin position="229"/>
        <end position="249"/>
    </location>
</feature>
<feature type="transmembrane region" description="Helical" evidence="1">
    <location>
        <begin position="263"/>
        <end position="283"/>
    </location>
</feature>
<feature type="transmembrane region" description="Helical" evidence="1">
    <location>
        <begin position="370"/>
        <end position="390"/>
    </location>
</feature>
<name>AB12I_ARATH</name>
<comment type="subcellular location">
    <subcellularLocation>
        <location evidence="2">Plastid</location>
        <location evidence="2">Chloroplast</location>
    </subcellularLocation>
    <subcellularLocation>
        <location evidence="3">Membrane</location>
        <topology evidence="3">Multi-pass membrane protein</topology>
    </subcellularLocation>
</comment>
<comment type="caution">
    <text evidence="4">Was originally thought to belong to the ABC transporter family (PubMed:18299247). Lacks the conserved ABC domain, which is one of the features of the ABC transporter family.</text>
</comment>
<comment type="sequence caution" evidence="3">
    <conflict type="erroneous gene model prediction">
        <sequence resource="EMBL-CDS" id="BAB02353"/>
    </conflict>
</comment>
<comment type="sequence caution" evidence="3">
    <conflict type="frameshift">
        <sequence resource="EMBL-CDS" id="BAB02353"/>
    </conflict>
</comment>
<proteinExistence type="evidence at protein level"/>
<dbReference type="EMBL" id="AB019232">
    <property type="protein sequence ID" value="BAB02353.1"/>
    <property type="status" value="ALT_SEQ"/>
    <property type="molecule type" value="Genomic_DNA"/>
</dbReference>
<dbReference type="EMBL" id="CP002686">
    <property type="protein sequence ID" value="AEE76525.1"/>
    <property type="molecule type" value="Genomic_DNA"/>
</dbReference>
<dbReference type="EMBL" id="AK118139">
    <property type="protein sequence ID" value="BAC42764.1"/>
    <property type="molecule type" value="mRNA"/>
</dbReference>
<dbReference type="EMBL" id="AF428451">
    <property type="protein sequence ID" value="AAL16220.1"/>
    <property type="molecule type" value="mRNA"/>
</dbReference>
<dbReference type="EMBL" id="BT029502">
    <property type="protein sequence ID" value="ABL66758.1"/>
    <property type="molecule type" value="mRNA"/>
</dbReference>
<dbReference type="RefSeq" id="NP_566688.4">
    <property type="nucleotide sequence ID" value="NM_113053.7"/>
</dbReference>
<dbReference type="SMR" id="Q944H2"/>
<dbReference type="BioGRID" id="7044">
    <property type="interactions" value="63"/>
</dbReference>
<dbReference type="FunCoup" id="Q944H2">
    <property type="interactions" value="572"/>
</dbReference>
<dbReference type="IntAct" id="Q944H2">
    <property type="interactions" value="64"/>
</dbReference>
<dbReference type="STRING" id="3702.Q944H2"/>
<dbReference type="TCDB" id="3.A.1.26.12">
    <property type="family name" value="the atp-binding cassette (abc) superfamily"/>
</dbReference>
<dbReference type="PaxDb" id="3702-AT3G21580.1"/>
<dbReference type="ProteomicsDB" id="245129"/>
<dbReference type="EnsemblPlants" id="AT3G21580.1">
    <property type="protein sequence ID" value="AT3G21580.1"/>
    <property type="gene ID" value="AT3G21580"/>
</dbReference>
<dbReference type="GeneID" id="821712"/>
<dbReference type="Gramene" id="AT3G21580.1">
    <property type="protein sequence ID" value="AT3G21580.1"/>
    <property type="gene ID" value="AT3G21580"/>
</dbReference>
<dbReference type="KEGG" id="ath:AT3G21580"/>
<dbReference type="Araport" id="AT3G21580"/>
<dbReference type="TAIR" id="AT3G21580">
    <property type="gene designation" value="ABCI12"/>
</dbReference>
<dbReference type="eggNOG" id="ENOG502QTQ5">
    <property type="taxonomic scope" value="Eukaryota"/>
</dbReference>
<dbReference type="HOGENOM" id="CLU_056469_0_1_1"/>
<dbReference type="InParanoid" id="Q944H2"/>
<dbReference type="OMA" id="MTRAINW"/>
<dbReference type="PhylomeDB" id="Q944H2"/>
<dbReference type="PRO" id="PR:Q944H2"/>
<dbReference type="Proteomes" id="UP000006548">
    <property type="component" value="Chromosome 3"/>
</dbReference>
<dbReference type="ExpressionAtlas" id="Q944H2">
    <property type="expression patterns" value="baseline and differential"/>
</dbReference>
<dbReference type="GO" id="GO:0009507">
    <property type="term" value="C:chloroplast"/>
    <property type="evidence" value="ECO:0007005"/>
    <property type="project" value="TAIR"/>
</dbReference>
<dbReference type="GO" id="GO:0005886">
    <property type="term" value="C:plasma membrane"/>
    <property type="evidence" value="ECO:0007669"/>
    <property type="project" value="UniProtKB-ARBA"/>
</dbReference>
<dbReference type="CDD" id="cd16914">
    <property type="entry name" value="EcfT"/>
    <property type="match status" value="1"/>
</dbReference>
<dbReference type="InterPro" id="IPR003339">
    <property type="entry name" value="ABC/ECF_trnsptr_transmembrane"/>
</dbReference>
<dbReference type="PANTHER" id="PTHR33514">
    <property type="entry name" value="PROTEIN ABCI12, CHLOROPLASTIC"/>
    <property type="match status" value="1"/>
</dbReference>
<dbReference type="PANTHER" id="PTHR33514:SF13">
    <property type="entry name" value="PROTEIN ABCI12, CHLOROPLASTIC"/>
    <property type="match status" value="1"/>
</dbReference>
<dbReference type="Pfam" id="PF02361">
    <property type="entry name" value="CbiQ"/>
    <property type="match status" value="1"/>
</dbReference>